<organism>
    <name type="scientific">Dickeya chrysanthemi</name>
    <name type="common">Pectobacterium chrysanthemi</name>
    <name type="synonym">Erwinia chrysanthemi</name>
    <dbReference type="NCBI Taxonomy" id="556"/>
    <lineage>
        <taxon>Bacteria</taxon>
        <taxon>Pseudomonadati</taxon>
        <taxon>Pseudomonadota</taxon>
        <taxon>Gammaproteobacteria</taxon>
        <taxon>Enterobacterales</taxon>
        <taxon>Pectobacteriaceae</taxon>
        <taxon>Dickeya</taxon>
    </lineage>
</organism>
<keyword id="KW-0997">Cell inner membrane</keyword>
<keyword id="KW-1003">Cell membrane</keyword>
<keyword id="KW-0472">Membrane</keyword>
<keyword id="KW-0762">Sugar transport</keyword>
<keyword id="KW-0769">Symport</keyword>
<keyword id="KW-0812">Transmembrane</keyword>
<keyword id="KW-1133">Transmembrane helix</keyword>
<keyword id="KW-0813">Transport</keyword>
<gene>
    <name evidence="1 4" type="primary">kdgT</name>
</gene>
<dbReference type="EMBL" id="M31456">
    <property type="protein sequence ID" value="AAA83925.1"/>
    <property type="status" value="ALT_INIT"/>
    <property type="molecule type" value="Genomic_DNA"/>
</dbReference>
<dbReference type="PIR" id="JQ0113">
    <property type="entry name" value="JQ0113"/>
</dbReference>
<dbReference type="TCDB" id="2.A.10.1.1">
    <property type="family name" value="the 2-keto-3-deoxygluconate transporter (kdgt) family"/>
</dbReference>
<dbReference type="GO" id="GO:0005886">
    <property type="term" value="C:plasma membrane"/>
    <property type="evidence" value="ECO:0007669"/>
    <property type="project" value="UniProtKB-SubCell"/>
</dbReference>
<dbReference type="GO" id="GO:0015649">
    <property type="term" value="F:2-keto-3-deoxygluconate:proton symporter activity"/>
    <property type="evidence" value="ECO:0007669"/>
    <property type="project" value="UniProtKB-UniRule"/>
</dbReference>
<dbReference type="HAMAP" id="MF_00070">
    <property type="entry name" value="KdgT"/>
    <property type="match status" value="1"/>
</dbReference>
<dbReference type="InterPro" id="IPR004684">
    <property type="entry name" value="2keto-3dGluconate_permease"/>
</dbReference>
<dbReference type="InterPro" id="IPR018395">
    <property type="entry name" value="2keto-3dGluconate_permease_sub"/>
</dbReference>
<dbReference type="NCBIfam" id="TIGR00793">
    <property type="entry name" value="kdgT"/>
    <property type="match status" value="1"/>
</dbReference>
<dbReference type="Pfam" id="PF03812">
    <property type="entry name" value="KdgT"/>
    <property type="match status" value="1"/>
</dbReference>
<proteinExistence type="evidence at protein level"/>
<name>KDGT_DICCH</name>
<protein>
    <recommendedName>
        <fullName evidence="1 4">2-keto-3-deoxygluconate permease</fullName>
        <shortName evidence="1 4">KDG permease</shortName>
    </recommendedName>
    <alternativeName>
        <fullName evidence="4">KDG transport system</fullName>
    </alternativeName>
    <alternativeName>
        <fullName evidence="4">Ketodeoxyuronate transport system</fullName>
    </alternativeName>
</protein>
<comment type="function">
    <text evidence="3">Catalyzes the proton-dependent uptake of 2-keto-3-deoxygluconate (KDG) into the cell (PubMed:3571157). Can also mediate the uptake of glucuronate with a low affinity, and may mediate the uptake of 5-keto-4-deoxyuronate (DKI) and 2,5-diketo-3-deoxygluconate (DKII), which are intermediates in pectin degradation (PubMed:3571157).</text>
</comment>
<comment type="catalytic activity">
    <reaction evidence="1 3">
        <text>2-dehydro-3-deoxy-D-gluconate(in) + H(+)(in) = 2-dehydro-3-deoxy-D-gluconate(out) + H(+)(out)</text>
        <dbReference type="Rhea" id="RHEA:29943"/>
        <dbReference type="ChEBI" id="CHEBI:15378"/>
        <dbReference type="ChEBI" id="CHEBI:57990"/>
    </reaction>
    <physiologicalReaction direction="right-to-left" evidence="1 3">
        <dbReference type="Rhea" id="RHEA:29945"/>
    </physiologicalReaction>
</comment>
<comment type="activity regulation">
    <text evidence="3">Uptake is inhibited by the protonophore uncouplers carbonyl cyanide m-chlorophenylhydrazone (CCCP) and 2,4-dinitrophenol, and by NaN(3).</text>
</comment>
<comment type="biophysicochemical properties">
    <kinetics>
        <KM evidence="3">0.52 mM for 2-keto-3-deoxygluconate</KM>
    </kinetics>
</comment>
<comment type="subcellular location">
    <subcellularLocation>
        <location evidence="1">Cell inner membrane</location>
        <topology evidence="1">Multi-pass membrane protein</topology>
    </subcellularLocation>
</comment>
<comment type="induction">
    <text evidence="3">Repressed by the HTH-type transcriptional regulator KdgR (PubMed:3571157). Induced by galacturonate and polygalacturonate, but not by external 2-keto-3-deoxygluconate (PubMed:3571157).</text>
</comment>
<comment type="similarity">
    <text evidence="1 5">Belongs to the KdgT transporter family.</text>
</comment>
<comment type="sequence caution" evidence="5">
    <conflict type="erroneous initiation">
        <sequence resource="EMBL-CDS" id="AAA83925"/>
    </conflict>
</comment>
<accession>P15701</accession>
<sequence length="339" mass="35037">MHIKRSIEKIPGGMMLVPLFLGALCHTFAPGAGKYFGSFTNGLISGTVPILAVWFFCMGASIRLSATGTVLRKSGTLVVTKIAVAWVVAAVASRILPENGVEVGFFAGLSTLALVAAMDMTNGGLYASIMQQYGTKEESGAFVLMSLESGPLMTMVILGTAGIASFEPHVFVGAVLPFLVGFALGNLDPELRDFFSRAVQTLIPFFAFALGNTIDLSVIGQTGLLGVLLGISVIIITGIPLIVADKVLGGGDGTAGIAASSSAGAAVATPVLIAEMVPAFKPVAPAATTLVATSVIVTSVLVPIITAMWSKRVKGGDGTVPKEDAVEEKAEQQRRRIIK</sequence>
<feature type="chain" id="PRO_0000209679" description="2-keto-3-deoxygluconate permease">
    <location>
        <begin position="1"/>
        <end position="339"/>
    </location>
</feature>
<feature type="transmembrane region" description="Helical" evidence="1">
    <location>
        <begin position="10"/>
        <end position="30"/>
    </location>
</feature>
<feature type="transmembrane region" description="Helical" evidence="1">
    <location>
        <begin position="42"/>
        <end position="62"/>
    </location>
</feature>
<feature type="transmembrane region" description="Helical" evidence="1">
    <location>
        <begin position="77"/>
        <end position="97"/>
    </location>
</feature>
<feature type="transmembrane region" description="Helical" evidence="1">
    <location>
        <begin position="100"/>
        <end position="120"/>
    </location>
</feature>
<feature type="transmembrane region" description="Helical" evidence="1">
    <location>
        <begin position="141"/>
        <end position="161"/>
    </location>
</feature>
<feature type="transmembrane region" description="Helical" evidence="1">
    <location>
        <begin position="163"/>
        <end position="183"/>
    </location>
</feature>
<feature type="transmembrane region" description="Helical" evidence="1">
    <location>
        <begin position="199"/>
        <end position="219"/>
    </location>
</feature>
<feature type="transmembrane region" description="Helical" evidence="1">
    <location>
        <begin position="224"/>
        <end position="244"/>
    </location>
</feature>
<feature type="transmembrane region" description="Helical" evidence="1">
    <location>
        <begin position="254"/>
        <end position="274"/>
    </location>
</feature>
<feature type="transmembrane region" description="Helical" evidence="1">
    <location>
        <begin position="289"/>
        <end position="309"/>
    </location>
</feature>
<feature type="region of interest" description="Disordered" evidence="2">
    <location>
        <begin position="315"/>
        <end position="339"/>
    </location>
</feature>
<feature type="compositionally biased region" description="Basic and acidic residues" evidence="2">
    <location>
        <begin position="320"/>
        <end position="339"/>
    </location>
</feature>
<evidence type="ECO:0000255" key="1">
    <source>
        <dbReference type="HAMAP-Rule" id="MF_00070"/>
    </source>
</evidence>
<evidence type="ECO:0000256" key="2">
    <source>
        <dbReference type="SAM" id="MobiDB-lite"/>
    </source>
</evidence>
<evidence type="ECO:0000269" key="3">
    <source>
    </source>
</evidence>
<evidence type="ECO:0000303" key="4">
    <source>
    </source>
</evidence>
<evidence type="ECO:0000305" key="5"/>
<reference key="1">
    <citation type="journal article" date="1989" name="Gene">
        <title>Nucleotide sequence of the Erwinia chrysanthemi gene encoding 2-keto-3-deoxygluconate permease.</title>
        <authorList>
            <person name="Allen C."/>
            <person name="Reverchon S."/>
            <person name="Robert-Baudouy J."/>
        </authorList>
    </citation>
    <scope>NUCLEOTIDE SEQUENCE [GENOMIC DNA]</scope>
</reference>
<reference key="2">
    <citation type="journal article" date="1987" name="J. Bacteriol.">
        <title>2-keto-3-deoxygluconate transport system in Erwinia chrysanthemi.</title>
        <authorList>
            <person name="Condemine G."/>
            <person name="Robert-Baudouy J."/>
        </authorList>
    </citation>
    <scope>FUNCTION</scope>
    <scope>CATALYTIC ACTIVITY</scope>
    <scope>ACTIVITY REGULATION</scope>
    <scope>BIOPHYSICOCHEMICAL PROPERTIES</scope>
    <scope>INDUCTION</scope>
    <source>
        <strain>A621</strain>
    </source>
</reference>